<name>IHFA_SHEPW</name>
<feature type="chain" id="PRO_1000122167" description="Integration host factor subunit alpha">
    <location>
        <begin position="1"/>
        <end position="98"/>
    </location>
</feature>
<feature type="region of interest" description="Disordered" evidence="2">
    <location>
        <begin position="49"/>
        <end position="71"/>
    </location>
</feature>
<gene>
    <name evidence="1" type="primary">ihfA</name>
    <name evidence="1" type="synonym">himA</name>
    <name type="ordered locus">swp_3013</name>
</gene>
<proteinExistence type="inferred from homology"/>
<dbReference type="EMBL" id="CP000472">
    <property type="protein sequence ID" value="ACJ29731.1"/>
    <property type="molecule type" value="Genomic_DNA"/>
</dbReference>
<dbReference type="RefSeq" id="WP_012142935.1">
    <property type="nucleotide sequence ID" value="NC_011566.1"/>
</dbReference>
<dbReference type="SMR" id="B8CR59"/>
<dbReference type="STRING" id="225849.swp_3013"/>
<dbReference type="KEGG" id="swp:swp_3013"/>
<dbReference type="eggNOG" id="COG0776">
    <property type="taxonomic scope" value="Bacteria"/>
</dbReference>
<dbReference type="HOGENOM" id="CLU_105066_1_3_6"/>
<dbReference type="OrthoDB" id="9797747at2"/>
<dbReference type="Proteomes" id="UP000000753">
    <property type="component" value="Chromosome"/>
</dbReference>
<dbReference type="GO" id="GO:0005829">
    <property type="term" value="C:cytosol"/>
    <property type="evidence" value="ECO:0007669"/>
    <property type="project" value="TreeGrafter"/>
</dbReference>
<dbReference type="GO" id="GO:0003677">
    <property type="term" value="F:DNA binding"/>
    <property type="evidence" value="ECO:0007669"/>
    <property type="project" value="UniProtKB-UniRule"/>
</dbReference>
<dbReference type="GO" id="GO:0030527">
    <property type="term" value="F:structural constituent of chromatin"/>
    <property type="evidence" value="ECO:0007669"/>
    <property type="project" value="InterPro"/>
</dbReference>
<dbReference type="GO" id="GO:0006310">
    <property type="term" value="P:DNA recombination"/>
    <property type="evidence" value="ECO:0007669"/>
    <property type="project" value="UniProtKB-UniRule"/>
</dbReference>
<dbReference type="GO" id="GO:0009893">
    <property type="term" value="P:positive regulation of metabolic process"/>
    <property type="evidence" value="ECO:0007669"/>
    <property type="project" value="UniProtKB-ARBA"/>
</dbReference>
<dbReference type="GO" id="GO:0006355">
    <property type="term" value="P:regulation of DNA-templated transcription"/>
    <property type="evidence" value="ECO:0007669"/>
    <property type="project" value="UniProtKB-UniRule"/>
</dbReference>
<dbReference type="GO" id="GO:0006417">
    <property type="term" value="P:regulation of translation"/>
    <property type="evidence" value="ECO:0007669"/>
    <property type="project" value="UniProtKB-UniRule"/>
</dbReference>
<dbReference type="CDD" id="cd13835">
    <property type="entry name" value="IHF_A"/>
    <property type="match status" value="1"/>
</dbReference>
<dbReference type="FunFam" id="4.10.520.10:FF:000002">
    <property type="entry name" value="Integration host factor subunit alpha"/>
    <property type="match status" value="1"/>
</dbReference>
<dbReference type="Gene3D" id="4.10.520.10">
    <property type="entry name" value="IHF-like DNA-binding proteins"/>
    <property type="match status" value="1"/>
</dbReference>
<dbReference type="HAMAP" id="MF_00380">
    <property type="entry name" value="IHF_alpha"/>
    <property type="match status" value="1"/>
</dbReference>
<dbReference type="InterPro" id="IPR000119">
    <property type="entry name" value="Hist_DNA-bd"/>
</dbReference>
<dbReference type="InterPro" id="IPR020816">
    <property type="entry name" value="Histone-like_DNA-bd_CS"/>
</dbReference>
<dbReference type="InterPro" id="IPR010992">
    <property type="entry name" value="IHF-like_DNA-bd_dom_sf"/>
</dbReference>
<dbReference type="InterPro" id="IPR005684">
    <property type="entry name" value="IHF_alpha"/>
</dbReference>
<dbReference type="NCBIfam" id="TIGR00987">
    <property type="entry name" value="himA"/>
    <property type="match status" value="1"/>
</dbReference>
<dbReference type="NCBIfam" id="NF001401">
    <property type="entry name" value="PRK00285.1"/>
    <property type="match status" value="1"/>
</dbReference>
<dbReference type="PANTHER" id="PTHR33175">
    <property type="entry name" value="DNA-BINDING PROTEIN HU"/>
    <property type="match status" value="1"/>
</dbReference>
<dbReference type="PANTHER" id="PTHR33175:SF2">
    <property type="entry name" value="INTEGRATION HOST FACTOR SUBUNIT ALPHA"/>
    <property type="match status" value="1"/>
</dbReference>
<dbReference type="Pfam" id="PF00216">
    <property type="entry name" value="Bac_DNA_binding"/>
    <property type="match status" value="1"/>
</dbReference>
<dbReference type="PRINTS" id="PR01727">
    <property type="entry name" value="DNABINDINGHU"/>
</dbReference>
<dbReference type="SMART" id="SM00411">
    <property type="entry name" value="BHL"/>
    <property type="match status" value="1"/>
</dbReference>
<dbReference type="SUPFAM" id="SSF47729">
    <property type="entry name" value="IHF-like DNA-binding proteins"/>
    <property type="match status" value="1"/>
</dbReference>
<dbReference type="PROSITE" id="PS00045">
    <property type="entry name" value="HISTONE_LIKE"/>
    <property type="match status" value="1"/>
</dbReference>
<reference key="1">
    <citation type="journal article" date="2008" name="PLoS ONE">
        <title>Environmental adaptation: genomic analysis of the piezotolerant and psychrotolerant deep-sea iron reducing bacterium Shewanella piezotolerans WP3.</title>
        <authorList>
            <person name="Wang F."/>
            <person name="Wang J."/>
            <person name="Jian H."/>
            <person name="Zhang B."/>
            <person name="Li S."/>
            <person name="Wang F."/>
            <person name="Zeng X."/>
            <person name="Gao L."/>
            <person name="Bartlett D.H."/>
            <person name="Yu J."/>
            <person name="Hu S."/>
            <person name="Xiao X."/>
        </authorList>
    </citation>
    <scope>NUCLEOTIDE SEQUENCE [LARGE SCALE GENOMIC DNA]</scope>
    <source>
        <strain>WP3 / JCM 13877</strain>
    </source>
</reference>
<organism>
    <name type="scientific">Shewanella piezotolerans (strain WP3 / JCM 13877)</name>
    <dbReference type="NCBI Taxonomy" id="225849"/>
    <lineage>
        <taxon>Bacteria</taxon>
        <taxon>Pseudomonadati</taxon>
        <taxon>Pseudomonadota</taxon>
        <taxon>Gammaproteobacteria</taxon>
        <taxon>Alteromonadales</taxon>
        <taxon>Shewanellaceae</taxon>
        <taxon>Shewanella</taxon>
    </lineage>
</organism>
<evidence type="ECO:0000255" key="1">
    <source>
        <dbReference type="HAMAP-Rule" id="MF_00380"/>
    </source>
</evidence>
<evidence type="ECO:0000256" key="2">
    <source>
        <dbReference type="SAM" id="MobiDB-lite"/>
    </source>
</evidence>
<comment type="function">
    <text evidence="1">This protein is one of the two subunits of integration host factor, a specific DNA-binding protein that functions in genetic recombination as well as in transcriptional and translational control.</text>
</comment>
<comment type="subunit">
    <text evidence="1">Heterodimer of an alpha and a beta chain.</text>
</comment>
<comment type="similarity">
    <text evidence="1">Belongs to the bacterial histone-like protein family.</text>
</comment>
<accession>B8CR59</accession>
<sequence>MALTKAEMAEHLFETLGINKRVAKEMVETFFEEIRQALESGEQVKLSGFGNFDLRDKNQRPGRNPKTGEDIPISARRVVTFRPGQKLKSRVEEANAKK</sequence>
<keyword id="KW-0233">DNA recombination</keyword>
<keyword id="KW-0238">DNA-binding</keyword>
<keyword id="KW-0804">Transcription</keyword>
<keyword id="KW-0805">Transcription regulation</keyword>
<keyword id="KW-0810">Translation regulation</keyword>
<protein>
    <recommendedName>
        <fullName evidence="1">Integration host factor subunit alpha</fullName>
        <shortName evidence="1">IHF-alpha</shortName>
    </recommendedName>
</protein>